<accession>A8G8D1</accession>
<keyword id="KW-0276">Fatty acid metabolism</keyword>
<keyword id="KW-0413">Isomerase</keyword>
<keyword id="KW-0442">Lipid degradation</keyword>
<keyword id="KW-0443">Lipid metabolism</keyword>
<keyword id="KW-0456">Lyase</keyword>
<keyword id="KW-0511">Multifunctional enzyme</keyword>
<keyword id="KW-0520">NAD</keyword>
<keyword id="KW-0560">Oxidoreductase</keyword>
<protein>
    <recommendedName>
        <fullName evidence="1">Fatty acid oxidation complex subunit alpha</fullName>
    </recommendedName>
    <domain>
        <recommendedName>
            <fullName evidence="1">Enoyl-CoA hydratase/Delta(3)-cis-Delta(2)-trans-enoyl-CoA isomerase/3-hydroxybutyryl-CoA epimerase</fullName>
            <ecNumber evidence="1">4.2.1.17</ecNumber>
            <ecNumber evidence="1">5.1.2.3</ecNumber>
            <ecNumber evidence="1">5.3.3.8</ecNumber>
        </recommendedName>
    </domain>
    <domain>
        <recommendedName>
            <fullName evidence="1">3-hydroxyacyl-CoA dehydrogenase</fullName>
            <ecNumber evidence="1">1.1.1.35</ecNumber>
        </recommendedName>
    </domain>
</protein>
<comment type="function">
    <text evidence="1">Involved in the aerobic and anaerobic degradation of long-chain fatty acids via beta-oxidation cycle. Catalyzes the formation of 3-oxoacyl-CoA from enoyl-CoA via L-3-hydroxyacyl-CoA. It can also use D-3-hydroxyacyl-CoA and cis-3-enoyl-CoA as substrate.</text>
</comment>
<comment type="catalytic activity">
    <reaction evidence="1">
        <text>a (3S)-3-hydroxyacyl-CoA + NAD(+) = a 3-oxoacyl-CoA + NADH + H(+)</text>
        <dbReference type="Rhea" id="RHEA:22432"/>
        <dbReference type="ChEBI" id="CHEBI:15378"/>
        <dbReference type="ChEBI" id="CHEBI:57318"/>
        <dbReference type="ChEBI" id="CHEBI:57540"/>
        <dbReference type="ChEBI" id="CHEBI:57945"/>
        <dbReference type="ChEBI" id="CHEBI:90726"/>
        <dbReference type="EC" id="1.1.1.35"/>
    </reaction>
</comment>
<comment type="catalytic activity">
    <reaction evidence="1">
        <text>a (3S)-3-hydroxyacyl-CoA = a (2E)-enoyl-CoA + H2O</text>
        <dbReference type="Rhea" id="RHEA:16105"/>
        <dbReference type="ChEBI" id="CHEBI:15377"/>
        <dbReference type="ChEBI" id="CHEBI:57318"/>
        <dbReference type="ChEBI" id="CHEBI:58856"/>
        <dbReference type="EC" id="4.2.1.17"/>
    </reaction>
</comment>
<comment type="catalytic activity">
    <reaction evidence="1">
        <text>a 4-saturated-(3S)-3-hydroxyacyl-CoA = a (3E)-enoyl-CoA + H2O</text>
        <dbReference type="Rhea" id="RHEA:20724"/>
        <dbReference type="ChEBI" id="CHEBI:15377"/>
        <dbReference type="ChEBI" id="CHEBI:58521"/>
        <dbReference type="ChEBI" id="CHEBI:137480"/>
        <dbReference type="EC" id="4.2.1.17"/>
    </reaction>
</comment>
<comment type="catalytic activity">
    <reaction evidence="1">
        <text>(3S)-3-hydroxybutanoyl-CoA = (3R)-3-hydroxybutanoyl-CoA</text>
        <dbReference type="Rhea" id="RHEA:21760"/>
        <dbReference type="ChEBI" id="CHEBI:57315"/>
        <dbReference type="ChEBI" id="CHEBI:57316"/>
        <dbReference type="EC" id="5.1.2.3"/>
    </reaction>
</comment>
<comment type="catalytic activity">
    <reaction evidence="1">
        <text>a (3Z)-enoyl-CoA = a 4-saturated (2E)-enoyl-CoA</text>
        <dbReference type="Rhea" id="RHEA:45900"/>
        <dbReference type="ChEBI" id="CHEBI:85097"/>
        <dbReference type="ChEBI" id="CHEBI:85489"/>
        <dbReference type="EC" id="5.3.3.8"/>
    </reaction>
</comment>
<comment type="catalytic activity">
    <reaction evidence="1">
        <text>a (3E)-enoyl-CoA = a 4-saturated (2E)-enoyl-CoA</text>
        <dbReference type="Rhea" id="RHEA:45228"/>
        <dbReference type="ChEBI" id="CHEBI:58521"/>
        <dbReference type="ChEBI" id="CHEBI:85097"/>
        <dbReference type="EC" id="5.3.3.8"/>
    </reaction>
</comment>
<comment type="pathway">
    <text evidence="1">Lipid metabolism; fatty acid beta-oxidation.</text>
</comment>
<comment type="subunit">
    <text evidence="1">Heterotetramer of two alpha chains (FadB) and two beta chains (FadA).</text>
</comment>
<comment type="similarity">
    <text evidence="1">In the N-terminal section; belongs to the enoyl-CoA hydratase/isomerase family.</text>
</comment>
<comment type="similarity">
    <text evidence="1">In the C-terminal section; belongs to the 3-hydroxyacyl-CoA dehydrogenase family.</text>
</comment>
<reference key="1">
    <citation type="submission" date="2007-09" db="EMBL/GenBank/DDBJ databases">
        <title>Complete sequence of chromosome of Serratia proteamaculans 568.</title>
        <authorList>
            <consortium name="US DOE Joint Genome Institute"/>
            <person name="Copeland A."/>
            <person name="Lucas S."/>
            <person name="Lapidus A."/>
            <person name="Barry K."/>
            <person name="Glavina del Rio T."/>
            <person name="Dalin E."/>
            <person name="Tice H."/>
            <person name="Pitluck S."/>
            <person name="Chain P."/>
            <person name="Malfatti S."/>
            <person name="Shin M."/>
            <person name="Vergez L."/>
            <person name="Schmutz J."/>
            <person name="Larimer F."/>
            <person name="Land M."/>
            <person name="Hauser L."/>
            <person name="Kyrpides N."/>
            <person name="Kim E."/>
            <person name="Taghavi S."/>
            <person name="Newman L."/>
            <person name="Vangronsveld J."/>
            <person name="van der Lelie D."/>
            <person name="Richardson P."/>
        </authorList>
    </citation>
    <scope>NUCLEOTIDE SEQUENCE [LARGE SCALE GENOMIC DNA]</scope>
    <source>
        <strain>568</strain>
    </source>
</reference>
<proteinExistence type="inferred from homology"/>
<gene>
    <name evidence="1" type="primary">fadB</name>
    <name type="ordered locus">Spro_0261</name>
</gene>
<evidence type="ECO:0000255" key="1">
    <source>
        <dbReference type="HAMAP-Rule" id="MF_01621"/>
    </source>
</evidence>
<name>FADB_SERP5</name>
<organism>
    <name type="scientific">Serratia proteamaculans (strain 568)</name>
    <dbReference type="NCBI Taxonomy" id="399741"/>
    <lineage>
        <taxon>Bacteria</taxon>
        <taxon>Pseudomonadati</taxon>
        <taxon>Pseudomonadota</taxon>
        <taxon>Gammaproteobacteria</taxon>
        <taxon>Enterobacterales</taxon>
        <taxon>Yersiniaceae</taxon>
        <taxon>Serratia</taxon>
    </lineage>
</organism>
<feature type="chain" id="PRO_1000069571" description="Fatty acid oxidation complex subunit alpha">
    <location>
        <begin position="1"/>
        <end position="729"/>
    </location>
</feature>
<feature type="region of interest" description="Enoyl-CoA hydratase/isomerase" evidence="1">
    <location>
        <begin position="1"/>
        <end position="189"/>
    </location>
</feature>
<feature type="region of interest" description="3-hydroxyacyl-CoA dehydrogenase" evidence="1">
    <location>
        <begin position="311"/>
        <end position="729"/>
    </location>
</feature>
<feature type="active site" description="For 3-hydroxyacyl-CoA dehydrogenase activity" evidence="1">
    <location>
        <position position="450"/>
    </location>
</feature>
<feature type="binding site" evidence="1">
    <location>
        <position position="296"/>
    </location>
    <ligand>
        <name>substrate</name>
    </ligand>
</feature>
<feature type="binding site" evidence="1">
    <location>
        <position position="324"/>
    </location>
    <ligand>
        <name>NAD(+)</name>
        <dbReference type="ChEBI" id="CHEBI:57540"/>
    </ligand>
</feature>
<feature type="binding site" evidence="1">
    <location>
        <position position="343"/>
    </location>
    <ligand>
        <name>NAD(+)</name>
        <dbReference type="ChEBI" id="CHEBI:57540"/>
    </ligand>
</feature>
<feature type="binding site" evidence="1">
    <location>
        <begin position="400"/>
        <end position="402"/>
    </location>
    <ligand>
        <name>NAD(+)</name>
        <dbReference type="ChEBI" id="CHEBI:57540"/>
    </ligand>
</feature>
<feature type="binding site" evidence="1">
    <location>
        <position position="407"/>
    </location>
    <ligand>
        <name>NAD(+)</name>
        <dbReference type="ChEBI" id="CHEBI:57540"/>
    </ligand>
</feature>
<feature type="binding site" evidence="1">
    <location>
        <position position="429"/>
    </location>
    <ligand>
        <name>NAD(+)</name>
        <dbReference type="ChEBI" id="CHEBI:57540"/>
    </ligand>
</feature>
<feature type="binding site" evidence="1">
    <location>
        <position position="453"/>
    </location>
    <ligand>
        <name>NAD(+)</name>
        <dbReference type="ChEBI" id="CHEBI:57540"/>
    </ligand>
</feature>
<feature type="binding site" evidence="1">
    <location>
        <position position="500"/>
    </location>
    <ligand>
        <name>substrate</name>
    </ligand>
</feature>
<feature type="binding site" evidence="1">
    <location>
        <position position="660"/>
    </location>
    <ligand>
        <name>substrate</name>
    </ligand>
</feature>
<feature type="site" description="Important for catalytic activity" evidence="1">
    <location>
        <position position="119"/>
    </location>
</feature>
<feature type="site" description="Important for catalytic activity" evidence="1">
    <location>
        <position position="139"/>
    </location>
</feature>
<sequence length="729" mass="79033">MLYQGETLQLHWLDNGIAELVFNAPGSVNKLDTRTVASLGEALAVLEKQTELKGLLLRSTKAAFIVGADITEFLSLFAAPAEKLQEWLNFANAIFNRLEDLPVPTISAINGYALGGGCECILATDFRVASPDARIGLPETKLGIMPGFGGSVRLPRLLGNDSALEIIAAGKDVSAKDALKVGLVDAVVAPEKLVEAALKMLQQAIEGKLDWRAYRQPKLEPLKLSPIEAAMSFTTAKGMVMQTAGKHYPAPMTAVKTIEAAARLGRDEALKLETASFVPLARSKEARALVGIFLNDQFVKGQAKKLAKGIEAPKQAAVLGAGIMGGGIAYQSALKGVPVVMKDISDKSLTLGMNEAAKLLNKQLERGKLDGMKMAQVLSTIQPTLDYAGIERAQVIVEAVVENPKIKAAVLSEVEGLIGENTVLASNTSTIPINHLAKSLKRPQNFCGMHFFNPVHRMPLVEIIRGEQTSDSTIAAVVAYASRMGKTPIVVNDCPGFFVNRVLFPYFAGFSMLLRDGADFRQIDKVMEKQFGWPMGPAYLLDVVGIDTAHHAQAVMAAGFPERMGKDYRDAIDVMFDNQRFGQKNQLGFYRYSQDNKGKPRKDNDEQTDVLLAEVSQPRQTISDEEIIARMMIPMINEVVRCLEENIIASPAEADMALVYGIGFPPFHGGAFRYLDTLGTANYVELAQRYAHLGALYQVPAGLRAKAEHNESYYPVAAPLSDVSTGQPA</sequence>
<dbReference type="EC" id="4.2.1.17" evidence="1"/>
<dbReference type="EC" id="5.1.2.3" evidence="1"/>
<dbReference type="EC" id="5.3.3.8" evidence="1"/>
<dbReference type="EC" id="1.1.1.35" evidence="1"/>
<dbReference type="EMBL" id="CP000826">
    <property type="protein sequence ID" value="ABV39371.1"/>
    <property type="molecule type" value="Genomic_DNA"/>
</dbReference>
<dbReference type="SMR" id="A8G8D1"/>
<dbReference type="STRING" id="399741.Spro_0261"/>
<dbReference type="KEGG" id="spe:Spro_0261"/>
<dbReference type="eggNOG" id="COG1024">
    <property type="taxonomic scope" value="Bacteria"/>
</dbReference>
<dbReference type="eggNOG" id="COG1250">
    <property type="taxonomic scope" value="Bacteria"/>
</dbReference>
<dbReference type="HOGENOM" id="CLU_009834_16_3_6"/>
<dbReference type="OrthoDB" id="5389341at2"/>
<dbReference type="UniPathway" id="UPA00659"/>
<dbReference type="GO" id="GO:0036125">
    <property type="term" value="C:fatty acid beta-oxidation multienzyme complex"/>
    <property type="evidence" value="ECO:0007669"/>
    <property type="project" value="InterPro"/>
</dbReference>
<dbReference type="GO" id="GO:0008692">
    <property type="term" value="F:3-hydroxybutyryl-CoA epimerase activity"/>
    <property type="evidence" value="ECO:0007669"/>
    <property type="project" value="UniProtKB-UniRule"/>
</dbReference>
<dbReference type="GO" id="GO:0004165">
    <property type="term" value="F:delta(3)-delta(2)-enoyl-CoA isomerase activity"/>
    <property type="evidence" value="ECO:0007669"/>
    <property type="project" value="UniProtKB-UniRule"/>
</dbReference>
<dbReference type="GO" id="GO:0004300">
    <property type="term" value="F:enoyl-CoA hydratase activity"/>
    <property type="evidence" value="ECO:0007669"/>
    <property type="project" value="UniProtKB-UniRule"/>
</dbReference>
<dbReference type="GO" id="GO:0016509">
    <property type="term" value="F:long-chain-3-hydroxyacyl-CoA dehydrogenase activity"/>
    <property type="evidence" value="ECO:0007669"/>
    <property type="project" value="TreeGrafter"/>
</dbReference>
<dbReference type="GO" id="GO:0070403">
    <property type="term" value="F:NAD+ binding"/>
    <property type="evidence" value="ECO:0007669"/>
    <property type="project" value="InterPro"/>
</dbReference>
<dbReference type="GO" id="GO:0006635">
    <property type="term" value="P:fatty acid beta-oxidation"/>
    <property type="evidence" value="ECO:0007669"/>
    <property type="project" value="UniProtKB-UniRule"/>
</dbReference>
<dbReference type="CDD" id="cd06558">
    <property type="entry name" value="crotonase-like"/>
    <property type="match status" value="1"/>
</dbReference>
<dbReference type="FunFam" id="1.10.1040.50:FF:000001">
    <property type="entry name" value="Fatty acid oxidation complex subunit alpha"/>
    <property type="match status" value="1"/>
</dbReference>
<dbReference type="FunFam" id="3.90.226.10:FF:000018">
    <property type="entry name" value="Fatty acid oxidation complex subunit alpha"/>
    <property type="match status" value="1"/>
</dbReference>
<dbReference type="FunFam" id="3.40.50.720:FF:000009">
    <property type="entry name" value="Fatty oxidation complex, alpha subunit"/>
    <property type="match status" value="1"/>
</dbReference>
<dbReference type="Gene3D" id="1.10.1040.50">
    <property type="match status" value="1"/>
</dbReference>
<dbReference type="Gene3D" id="3.90.226.10">
    <property type="entry name" value="2-enoyl-CoA Hydratase, Chain A, domain 1"/>
    <property type="match status" value="1"/>
</dbReference>
<dbReference type="Gene3D" id="3.40.50.720">
    <property type="entry name" value="NAD(P)-binding Rossmann-like Domain"/>
    <property type="match status" value="1"/>
</dbReference>
<dbReference type="HAMAP" id="MF_01621">
    <property type="entry name" value="FadB"/>
    <property type="match status" value="1"/>
</dbReference>
<dbReference type="InterPro" id="IPR006180">
    <property type="entry name" value="3-OHacyl-CoA_DH_CS"/>
</dbReference>
<dbReference type="InterPro" id="IPR006176">
    <property type="entry name" value="3-OHacyl-CoA_DH_NAD-bd"/>
</dbReference>
<dbReference type="InterPro" id="IPR006108">
    <property type="entry name" value="3HC_DH_C"/>
</dbReference>
<dbReference type="InterPro" id="IPR008927">
    <property type="entry name" value="6-PGluconate_DH-like_C_sf"/>
</dbReference>
<dbReference type="InterPro" id="IPR029045">
    <property type="entry name" value="ClpP/crotonase-like_dom_sf"/>
</dbReference>
<dbReference type="InterPro" id="IPR018376">
    <property type="entry name" value="Enoyl-CoA_hyd/isom_CS"/>
</dbReference>
<dbReference type="InterPro" id="IPR001753">
    <property type="entry name" value="Enoyl-CoA_hydra/iso"/>
</dbReference>
<dbReference type="InterPro" id="IPR050136">
    <property type="entry name" value="FA_oxidation_alpha_subunit"/>
</dbReference>
<dbReference type="InterPro" id="IPR012799">
    <property type="entry name" value="FadB"/>
</dbReference>
<dbReference type="InterPro" id="IPR036291">
    <property type="entry name" value="NAD(P)-bd_dom_sf"/>
</dbReference>
<dbReference type="NCBIfam" id="TIGR02437">
    <property type="entry name" value="FadB"/>
    <property type="match status" value="1"/>
</dbReference>
<dbReference type="NCBIfam" id="NF008727">
    <property type="entry name" value="PRK11730.1"/>
    <property type="match status" value="1"/>
</dbReference>
<dbReference type="PANTHER" id="PTHR43612">
    <property type="entry name" value="TRIFUNCTIONAL ENZYME SUBUNIT ALPHA"/>
    <property type="match status" value="1"/>
</dbReference>
<dbReference type="PANTHER" id="PTHR43612:SF3">
    <property type="entry name" value="TRIFUNCTIONAL ENZYME SUBUNIT ALPHA, MITOCHONDRIAL"/>
    <property type="match status" value="1"/>
</dbReference>
<dbReference type="Pfam" id="PF00725">
    <property type="entry name" value="3HCDH"/>
    <property type="match status" value="2"/>
</dbReference>
<dbReference type="Pfam" id="PF02737">
    <property type="entry name" value="3HCDH_N"/>
    <property type="match status" value="1"/>
</dbReference>
<dbReference type="Pfam" id="PF00378">
    <property type="entry name" value="ECH_1"/>
    <property type="match status" value="1"/>
</dbReference>
<dbReference type="SUPFAM" id="SSF48179">
    <property type="entry name" value="6-phosphogluconate dehydrogenase C-terminal domain-like"/>
    <property type="match status" value="2"/>
</dbReference>
<dbReference type="SUPFAM" id="SSF52096">
    <property type="entry name" value="ClpP/crotonase"/>
    <property type="match status" value="1"/>
</dbReference>
<dbReference type="SUPFAM" id="SSF51735">
    <property type="entry name" value="NAD(P)-binding Rossmann-fold domains"/>
    <property type="match status" value="1"/>
</dbReference>
<dbReference type="PROSITE" id="PS00067">
    <property type="entry name" value="3HCDH"/>
    <property type="match status" value="1"/>
</dbReference>
<dbReference type="PROSITE" id="PS00166">
    <property type="entry name" value="ENOYL_COA_HYDRATASE"/>
    <property type="match status" value="1"/>
</dbReference>